<dbReference type="EMBL" id="AM406671">
    <property type="protein sequence ID" value="CAL99041.1"/>
    <property type="molecule type" value="Genomic_DNA"/>
</dbReference>
<dbReference type="SMR" id="A2RNZ6"/>
<dbReference type="STRING" id="416870.llmg_2477"/>
<dbReference type="KEGG" id="llm:llmg_2477"/>
<dbReference type="eggNOG" id="COG0833">
    <property type="taxonomic scope" value="Bacteria"/>
</dbReference>
<dbReference type="HOGENOM" id="CLU_007946_9_2_9"/>
<dbReference type="OrthoDB" id="9780162at2"/>
<dbReference type="PhylomeDB" id="A2RNZ6"/>
<dbReference type="Proteomes" id="UP000000364">
    <property type="component" value="Chromosome"/>
</dbReference>
<dbReference type="GO" id="GO:0005886">
    <property type="term" value="C:plasma membrane"/>
    <property type="evidence" value="ECO:0007669"/>
    <property type="project" value="UniProtKB-SubCell"/>
</dbReference>
<dbReference type="GO" id="GO:0015171">
    <property type="term" value="F:amino acid transmembrane transporter activity"/>
    <property type="evidence" value="ECO:0007669"/>
    <property type="project" value="TreeGrafter"/>
</dbReference>
<dbReference type="FunFam" id="1.20.1740.10:FF:000001">
    <property type="entry name" value="Amino acid permease"/>
    <property type="match status" value="1"/>
</dbReference>
<dbReference type="Gene3D" id="1.20.1740.10">
    <property type="entry name" value="Amino acid/polyamine transporter I"/>
    <property type="match status" value="1"/>
</dbReference>
<dbReference type="InterPro" id="IPR004841">
    <property type="entry name" value="AA-permease/SLC12A_dom"/>
</dbReference>
<dbReference type="InterPro" id="IPR050524">
    <property type="entry name" value="APC_YAT"/>
</dbReference>
<dbReference type="PANTHER" id="PTHR43341">
    <property type="entry name" value="AMINO ACID PERMEASE"/>
    <property type="match status" value="1"/>
</dbReference>
<dbReference type="PANTHER" id="PTHR43341:SF1">
    <property type="entry name" value="GENERAL AMINO-ACID PERMEASE GAP1"/>
    <property type="match status" value="1"/>
</dbReference>
<dbReference type="Pfam" id="PF00324">
    <property type="entry name" value="AA_permease"/>
    <property type="match status" value="1"/>
</dbReference>
<dbReference type="PIRSF" id="PIRSF006060">
    <property type="entry name" value="AA_transporter"/>
    <property type="match status" value="1"/>
</dbReference>
<accession>A2RNZ6</accession>
<comment type="function">
    <text evidence="2">Permease involved in lysine uptake.</text>
</comment>
<comment type="catalytic activity">
    <reaction evidence="5">
        <text>L-lysine(out) + H(+)(out) = L-lysine(in) + H(+)(in)</text>
        <dbReference type="Rhea" id="RHEA:28911"/>
        <dbReference type="ChEBI" id="CHEBI:15378"/>
        <dbReference type="ChEBI" id="CHEBI:32551"/>
    </reaction>
    <physiologicalReaction direction="left-to-right" evidence="5">
        <dbReference type="Rhea" id="RHEA:28912"/>
    </physiologicalReaction>
</comment>
<comment type="subcellular location">
    <subcellularLocation>
        <location evidence="4">Cell membrane</location>
        <topology evidence="1">Multi-pass membrane protein</topology>
    </subcellularLocation>
</comment>
<comment type="disruption phenotype">
    <text evidence="2">Deletion of the gene abolishes high-affinity lysine uptake without affecting growth on free amino acids.</text>
</comment>
<comment type="similarity">
    <text evidence="4">Belongs to the amino acid-polyamine-organocation (APC) superfamily. Amino acid transporter (AAT) (TC 2.A.3.1) family.</text>
</comment>
<proteinExistence type="evidence at protein level"/>
<keyword id="KW-0029">Amino-acid transport</keyword>
<keyword id="KW-1003">Cell membrane</keyword>
<keyword id="KW-0472">Membrane</keyword>
<keyword id="KW-0812">Transmembrane</keyword>
<keyword id="KW-1133">Transmembrane helix</keyword>
<keyword id="KW-0813">Transport</keyword>
<sequence>MRVSLSLTSRCRINFIRERILENSSNSTTETQVKRALKSRHVSMIALGGTIGTGLFLTSGDVIHTAGPFGALTAYVLIGAMVYFLMTSLGEMATYLPTSGSFSDYGTRYVDPAFGFALGWNYWLNWAITVAVDLTAVALCIKFWLPDVPSWIFSLIALIIVFSINALSVKTFGETEYWLSAIKITVVVLFLIIGFLSIFGIMGGHIDVAKNLSVGNHGFVGGLGSFTTGGGILGVLLVAGFSFQGTELLGITAGEAENPEKSIPKAMNSIFWRILVFYILSIFVMAAIIPFTDPHLVGGNSAAQSPFTIVFERVGFSIAASIMNAVVLTSVVSAANSGMYASTRMLYSLAKDGGAPKIFSKTSKNGIPFIALLATTAVALLTFLTSIYGVSFFTLLVSASGLTGFIAWIGIAISHFRFRRAYVAQGKDVKKLPYHAKLFPFGPILALIMTVLVTLGQDPMLLFGKTWVQGVVMYAAIPLFFILYLGYKFKNKTKLIPLKDVDLSRHKD</sequence>
<evidence type="ECO:0000255" key="1"/>
<evidence type="ECO:0000269" key="2">
    <source>
    </source>
</evidence>
<evidence type="ECO:0000303" key="3">
    <source>
    </source>
</evidence>
<evidence type="ECO:0000305" key="4"/>
<evidence type="ECO:0000305" key="5">
    <source>
    </source>
</evidence>
<evidence type="ECO:0000312" key="6">
    <source>
        <dbReference type="EMBL" id="CAL99041.1"/>
    </source>
</evidence>
<organism>
    <name type="scientific">Lactococcus lactis subsp. cremoris (strain MG1363)</name>
    <dbReference type="NCBI Taxonomy" id="416870"/>
    <lineage>
        <taxon>Bacteria</taxon>
        <taxon>Bacillati</taxon>
        <taxon>Bacillota</taxon>
        <taxon>Bacilli</taxon>
        <taxon>Lactobacillales</taxon>
        <taxon>Streptococcaceae</taxon>
        <taxon>Lactococcus</taxon>
        <taxon>Lactococcus cremoris subsp. cremoris</taxon>
    </lineage>
</organism>
<protein>
    <recommendedName>
        <fullName evidence="4">Lysine-specific permease LysP</fullName>
    </recommendedName>
    <alternativeName>
        <fullName evidence="3">Lysine transporter LysP</fullName>
    </alternativeName>
</protein>
<gene>
    <name evidence="3" type="primary">lysP</name>
    <name evidence="6" type="ordered locus">llmg_2477</name>
</gene>
<feature type="chain" id="PRO_0000442541" description="Lysine-specific permease LysP">
    <location>
        <begin position="1"/>
        <end position="508"/>
    </location>
</feature>
<feature type="transmembrane region" description="Helical" evidence="1">
    <location>
        <begin position="43"/>
        <end position="63"/>
    </location>
</feature>
<feature type="transmembrane region" description="Helical" evidence="1">
    <location>
        <begin position="66"/>
        <end position="86"/>
    </location>
</feature>
<feature type="transmembrane region" description="Helical" evidence="1">
    <location>
        <begin position="112"/>
        <end position="132"/>
    </location>
</feature>
<feature type="transmembrane region" description="Helical" evidence="1">
    <location>
        <begin position="144"/>
        <end position="164"/>
    </location>
</feature>
<feature type="transmembrane region" description="Helical" evidence="1">
    <location>
        <begin position="184"/>
        <end position="204"/>
    </location>
</feature>
<feature type="transmembrane region" description="Helical" evidence="1">
    <location>
        <begin position="219"/>
        <end position="239"/>
    </location>
</feature>
<feature type="transmembrane region" description="Helical" evidence="1">
    <location>
        <begin position="270"/>
        <end position="290"/>
    </location>
</feature>
<feature type="transmembrane region" description="Helical" evidence="1">
    <location>
        <begin position="314"/>
        <end position="334"/>
    </location>
</feature>
<feature type="transmembrane region" description="Helical" evidence="1">
    <location>
        <begin position="367"/>
        <end position="387"/>
    </location>
</feature>
<feature type="transmembrane region" description="Helical" evidence="1">
    <location>
        <begin position="393"/>
        <end position="413"/>
    </location>
</feature>
<feature type="transmembrane region" description="Helical" evidence="1">
    <location>
        <begin position="436"/>
        <end position="456"/>
    </location>
</feature>
<feature type="transmembrane region" description="Helical" evidence="1">
    <location>
        <begin position="467"/>
        <end position="487"/>
    </location>
</feature>
<reference key="1">
    <citation type="journal article" date="2007" name="J. Bacteriol.">
        <title>The complete genome sequence of the lactic acid bacterial paradigm Lactococcus lactis subsp. cremoris MG1363.</title>
        <authorList>
            <person name="Wegmann U."/>
            <person name="O'Connell-Motherway M."/>
            <person name="Zomer A."/>
            <person name="Buist G."/>
            <person name="Shearman C."/>
            <person name="Canchaya C."/>
            <person name="Ventura M."/>
            <person name="Goesmann A."/>
            <person name="Gasson M.J."/>
            <person name="Kuipers O.P."/>
            <person name="van Sinderen D."/>
            <person name="Kok J."/>
        </authorList>
    </citation>
    <scope>NUCLEOTIDE SEQUENCE [LARGE SCALE GENOMIC DNA]</scope>
    <source>
        <strain>MG1363</strain>
    </source>
</reference>
<reference key="2">
    <citation type="journal article" date="2013" name="J. Bacteriol.">
        <title>Cloning, expression, and functional characterization of secondary amino acid transporters of Lactococcus lactis.</title>
        <authorList>
            <person name="Trip H."/>
            <person name="Mulder N.L."/>
            <person name="Lolkema J.S."/>
        </authorList>
    </citation>
    <scope>FUNCTION IN LYSINE UPTAKE</scope>
    <scope>DISRUPTION PHENOTYPE</scope>
    <source>
        <strain>MG1363</strain>
    </source>
</reference>
<name>LYSP_LACLM</name>